<keyword id="KW-0007">Acetylation</keyword>
<keyword id="KW-0963">Cytoplasm</keyword>
<keyword id="KW-0479">Metal-binding</keyword>
<keyword id="KW-0488">Methylation</keyword>
<keyword id="KW-0597">Phosphoprotein</keyword>
<keyword id="KW-1185">Reference proteome</keyword>
<keyword id="KW-0808">Transferase</keyword>
<keyword id="KW-0832">Ubl conjugation</keyword>
<keyword id="KW-0833">Ubl conjugation pathway</keyword>
<keyword id="KW-0862">Zinc</keyword>
<keyword id="KW-0863">Zinc-finger</keyword>
<feature type="initiator methionine" description="Removed" evidence="3">
    <location>
        <position position="1"/>
    </location>
</feature>
<feature type="chain" id="PRO_0000458406" description="E3 ubiquitin-protein ligase RNF123">
    <location>
        <begin position="2"/>
        <end position="1314"/>
    </location>
</feature>
<feature type="domain" description="B30.2/SPRY" evidence="5">
    <location>
        <begin position="74"/>
        <end position="254"/>
    </location>
</feature>
<feature type="zinc finger region" description="RING-type" evidence="4">
    <location>
        <begin position="1254"/>
        <end position="1292"/>
    </location>
</feature>
<feature type="region of interest" description="Disordered" evidence="6">
    <location>
        <begin position="460"/>
        <end position="481"/>
    </location>
</feature>
<feature type="region of interest" description="Interaction with NFKB1" evidence="3">
    <location>
        <begin position="968"/>
        <end position="974"/>
    </location>
</feature>
<feature type="compositionally biased region" description="Basic and acidic residues" evidence="6">
    <location>
        <begin position="462"/>
        <end position="481"/>
    </location>
</feature>
<feature type="binding site" evidence="3">
    <location>
        <position position="1254"/>
    </location>
    <ligand>
        <name>Zn(2+)</name>
        <dbReference type="ChEBI" id="CHEBI:29105"/>
        <label>1</label>
    </ligand>
</feature>
<feature type="binding site" evidence="3">
    <location>
        <position position="1257"/>
    </location>
    <ligand>
        <name>Zn(2+)</name>
        <dbReference type="ChEBI" id="CHEBI:29105"/>
        <label>1</label>
    </ligand>
</feature>
<feature type="binding site" evidence="3">
    <location>
        <position position="1269"/>
    </location>
    <ligand>
        <name>Zn(2+)</name>
        <dbReference type="ChEBI" id="CHEBI:29105"/>
        <label>2</label>
    </ligand>
</feature>
<feature type="binding site" evidence="3">
    <location>
        <position position="1271"/>
    </location>
    <ligand>
        <name>Zn(2+)</name>
        <dbReference type="ChEBI" id="CHEBI:29105"/>
        <label>2</label>
    </ligand>
</feature>
<feature type="binding site" evidence="3">
    <location>
        <position position="1274"/>
    </location>
    <ligand>
        <name>Zn(2+)</name>
        <dbReference type="ChEBI" id="CHEBI:29105"/>
        <label>1</label>
    </ligand>
</feature>
<feature type="binding site" evidence="3">
    <location>
        <position position="1277"/>
    </location>
    <ligand>
        <name>Zn(2+)</name>
        <dbReference type="ChEBI" id="CHEBI:29105"/>
        <label>1</label>
    </ligand>
</feature>
<feature type="binding site" evidence="3">
    <location>
        <position position="1288"/>
    </location>
    <ligand>
        <name>Zn(2+)</name>
        <dbReference type="ChEBI" id="CHEBI:29105"/>
        <label>2</label>
    </ligand>
</feature>
<feature type="binding site" evidence="3">
    <location>
        <position position="1291"/>
    </location>
    <ligand>
        <name>Zn(2+)</name>
        <dbReference type="ChEBI" id="CHEBI:29105"/>
        <label>2</label>
    </ligand>
</feature>
<feature type="modified residue" description="N-acetylalanine" evidence="3">
    <location>
        <position position="2"/>
    </location>
</feature>
<feature type="modified residue" description="Phosphoserine" evidence="1">
    <location>
        <position position="675"/>
    </location>
</feature>
<feature type="modified residue" description="Asymmetric dimethylarginine" evidence="2">
    <location>
        <position position="683"/>
    </location>
</feature>
<accession>A0A5F9C6I2</accession>
<accession>G1TTN8</accession>
<gene>
    <name evidence="3" type="primary">RNF123</name>
    <name evidence="8" type="synonym">KPC1</name>
</gene>
<organism>
    <name type="scientific">Oryctolagus cuniculus</name>
    <name type="common">Rabbit</name>
    <dbReference type="NCBI Taxonomy" id="9986"/>
    <lineage>
        <taxon>Eukaryota</taxon>
        <taxon>Metazoa</taxon>
        <taxon>Chordata</taxon>
        <taxon>Craniata</taxon>
        <taxon>Vertebrata</taxon>
        <taxon>Euteleostomi</taxon>
        <taxon>Mammalia</taxon>
        <taxon>Eutheria</taxon>
        <taxon>Euarchontoglires</taxon>
        <taxon>Glires</taxon>
        <taxon>Lagomorpha</taxon>
        <taxon>Leporidae</taxon>
        <taxon>Oryctolagus</taxon>
    </lineage>
</organism>
<sequence>MASKGAGVPLSRKSYRLTSETERPRVTGIVHEKLLNDYLHRIFSSPDHATPTATSRKPLNFQNLPEHLDQLLQVDSEDEESQGQVEGRLGPSTVVLDHTGGFEGLLLVDDDLLGVIGHSNFGTIRSTTCVYKGKWVYEVLISSQGLMQIGWCTINCRFNQEEGVGDTHNSYAYDGNRVRKWNVTTTNYGKAWAAGDIVSCLIDLDDGTLSFCLNGVSLGTAFENLSRGLGMAYFPAISLSFKESVAFNFGSRPLRYPVAGYRPLQDPPCADLTRAQRLLGCFRAVLSVELDPMEGRLVEKESSEWQLQGQPTVLLTLAHIFHRFAPLLHQVYLVEAVLMSFLLGIVEKATPAQAQSAVHQILDLLWLFMEDYEVQDCLKQLMMSLLRLYRFSPIVPDLGLQIHYLRLTIAILRHQKSRKFLLSNVLFDVLRSVVFFYIKSPLRVEEAGLQELIPTTWWPHRSSREGKDSAEDRAEAAEERPRRRAYERGCQRLKKRIEVVEALQVQILKLLLDNKDDNGGEASRYIFLTKFRKFLQENASGRGNMPMLCPPEYMVCFLHRLISALRYYWDEYKASNPRASCSEEAYIPPQVFYNGKVDYFDLQRLGGLLSHLRKTLKDDLASKANIVIDPLELQATTMDDLDEDEEPAPAAAQRPVQALAVGGALPLPRPGWLSSPTLGRANRFLSTAAVSLMTPRRPLSTSEKVKVRTLSVEQRTREDIEGSHWNEGLLLGRPPEEPEQPLTENSLLEVLDGAIMMYNLSVHQQLGKMVGVSDDVNEYATALRDTEDKIRRCPKRRKDILAELTKSQKVFSEKLDHLSRRLAWVHATVYSQEKMLDIYWLLRVCLRTIEHGDRTGSLFAFMPEFYLSVAINSYSALKNYFGPVHSMEELPGYEETLTRLAAILAKHFADTRIVGTDIRDSLMQALASYVCYPHSLRAVERIPEEQRVAMVRSLLAPYEQRPWAQTNWILVRLWRGCGFGYRYTRLPHLLKTKPEDASLPSLQKPCPSTLLQQHMADLLRQGPDVAPSFLNSVLNQLNWAFSEFIGMIQEIQQAAERLERNFVDSRQLKVCATCFDLSVSLLRVLEMTITLVPEIFLDWARPTSEMLLRRLAQLLNQVLNRVTAERNLFDRVVTLRLPGLESVDHYPILVAVTGILVRLLVHGPSSETERATSVLLADPCFQLRSISYLLGQPEPPAPGAALPAPDRKRFSLQSYADYISAEELAQVEQMLAHLTSASAQAAAASLPTSEEDLCPICYAHPISAVFQPCGHKSCKACIDQHLMNNKDCFFCKATIVSVEDWEKGASASATSSAA</sequence>
<protein>
    <recommendedName>
        <fullName evidence="9">E3 ubiquitin-protein ligase RNF123</fullName>
        <ecNumber evidence="3">2.3.2.27</ecNumber>
    </recommendedName>
    <alternativeName>
        <fullName evidence="8">Kip1 ubiquitination-promoting complex protein 1</fullName>
    </alternativeName>
    <alternativeName>
        <fullName>RING finger protein 123</fullName>
    </alternativeName>
</protein>
<evidence type="ECO:0000250" key="1">
    <source>
        <dbReference type="UniProtKB" id="D3ZXK7"/>
    </source>
</evidence>
<evidence type="ECO:0000250" key="2">
    <source>
        <dbReference type="UniProtKB" id="Q5XPI3"/>
    </source>
</evidence>
<evidence type="ECO:0000250" key="3">
    <source>
        <dbReference type="UniProtKB" id="Q5XPI4"/>
    </source>
</evidence>
<evidence type="ECO:0000255" key="4">
    <source>
        <dbReference type="PROSITE-ProRule" id="PRU00175"/>
    </source>
</evidence>
<evidence type="ECO:0000255" key="5">
    <source>
        <dbReference type="PROSITE-ProRule" id="PRU00548"/>
    </source>
</evidence>
<evidence type="ECO:0000256" key="6">
    <source>
        <dbReference type="SAM" id="MobiDB-lite"/>
    </source>
</evidence>
<evidence type="ECO:0000269" key="7">
    <source>
    </source>
</evidence>
<evidence type="ECO:0000303" key="8">
    <source>
    </source>
</evidence>
<evidence type="ECO:0000305" key="9"/>
<name>RN123_RABIT</name>
<dbReference type="EC" id="2.3.2.27" evidence="3"/>
<dbReference type="EMBL" id="AAGW02044088">
    <property type="status" value="NOT_ANNOTATED_CDS"/>
    <property type="molecule type" value="Genomic_DNA"/>
</dbReference>
<dbReference type="EMBL" id="AAGW02044089">
    <property type="status" value="NOT_ANNOTATED_CDS"/>
    <property type="molecule type" value="Genomic_DNA"/>
</dbReference>
<dbReference type="EMBL" id="AAGW02044090">
    <property type="status" value="NOT_ANNOTATED_CDS"/>
    <property type="molecule type" value="Genomic_DNA"/>
</dbReference>
<dbReference type="SMR" id="A0A5F9C6I2"/>
<dbReference type="FunCoup" id="A0A5F9C6I2">
    <property type="interactions" value="893"/>
</dbReference>
<dbReference type="STRING" id="9986.ENSOCUP00000020409"/>
<dbReference type="PaxDb" id="9986-ENSOCUP00000020409"/>
<dbReference type="eggNOG" id="KOG2242">
    <property type="taxonomic scope" value="Eukaryota"/>
</dbReference>
<dbReference type="eggNOG" id="KOG4692">
    <property type="taxonomic scope" value="Eukaryota"/>
</dbReference>
<dbReference type="HOGENOM" id="CLU_006687_2_0_1"/>
<dbReference type="InParanoid" id="A0A5F9C6I2"/>
<dbReference type="TreeFam" id="TF313546"/>
<dbReference type="UniPathway" id="UPA00143"/>
<dbReference type="Proteomes" id="UP000001811">
    <property type="component" value="Chromosome 9"/>
</dbReference>
<dbReference type="Bgee" id="ENSOCUG00000032568">
    <property type="expression patterns" value="Expressed in blood and 18 other cell types or tissues"/>
</dbReference>
<dbReference type="GO" id="GO:0005737">
    <property type="term" value="C:cytoplasm"/>
    <property type="evidence" value="ECO:0007669"/>
    <property type="project" value="UniProtKB-SubCell"/>
</dbReference>
<dbReference type="GO" id="GO:0061630">
    <property type="term" value="F:ubiquitin protein ligase activity"/>
    <property type="evidence" value="ECO:0000250"/>
    <property type="project" value="UniProtKB"/>
</dbReference>
<dbReference type="GO" id="GO:0008270">
    <property type="term" value="F:zinc ion binding"/>
    <property type="evidence" value="ECO:0007669"/>
    <property type="project" value="UniProtKB-KW"/>
</dbReference>
<dbReference type="GO" id="GO:0051604">
    <property type="term" value="P:protein maturation"/>
    <property type="evidence" value="ECO:0000250"/>
    <property type="project" value="UniProtKB"/>
</dbReference>
<dbReference type="GO" id="GO:0016567">
    <property type="term" value="P:protein ubiquitination"/>
    <property type="evidence" value="ECO:0007669"/>
    <property type="project" value="UniProtKB-UniPathway"/>
</dbReference>
<dbReference type="GO" id="GO:0051603">
    <property type="term" value="P:proteolysis involved in protein catabolic process"/>
    <property type="evidence" value="ECO:0007669"/>
    <property type="project" value="TreeGrafter"/>
</dbReference>
<dbReference type="CDD" id="cd16541">
    <property type="entry name" value="RING-HC_RNF123"/>
    <property type="match status" value="1"/>
</dbReference>
<dbReference type="CDD" id="cd12882">
    <property type="entry name" value="SPRY_RNF123"/>
    <property type="match status" value="1"/>
</dbReference>
<dbReference type="FunFam" id="2.60.120.920:FF:000031">
    <property type="entry name" value="E3 ubiquitin-protein ligase RNF123"/>
    <property type="match status" value="1"/>
</dbReference>
<dbReference type="FunFam" id="3.30.40.10:FF:000133">
    <property type="entry name" value="E3 ubiquitin-protein ligase RNF123"/>
    <property type="match status" value="1"/>
</dbReference>
<dbReference type="Gene3D" id="2.60.120.920">
    <property type="match status" value="1"/>
</dbReference>
<dbReference type="Gene3D" id="3.30.40.10">
    <property type="entry name" value="Zinc/RING finger domain, C3HC4 (zinc finger)"/>
    <property type="match status" value="1"/>
</dbReference>
<dbReference type="InterPro" id="IPR001870">
    <property type="entry name" value="B30.2/SPRY"/>
</dbReference>
<dbReference type="InterPro" id="IPR043136">
    <property type="entry name" value="B30.2/SPRY_sf"/>
</dbReference>
<dbReference type="InterPro" id="IPR013320">
    <property type="entry name" value="ConA-like_dom_sf"/>
</dbReference>
<dbReference type="InterPro" id="IPR045129">
    <property type="entry name" value="RNF123/RSPRY1-like"/>
</dbReference>
<dbReference type="InterPro" id="IPR003877">
    <property type="entry name" value="SPRY_dom"/>
</dbReference>
<dbReference type="InterPro" id="IPR035773">
    <property type="entry name" value="SPRY_RNF123"/>
</dbReference>
<dbReference type="InterPro" id="IPR001841">
    <property type="entry name" value="Znf_RING"/>
</dbReference>
<dbReference type="InterPro" id="IPR013083">
    <property type="entry name" value="Znf_RING/FYVE/PHD"/>
</dbReference>
<dbReference type="PANTHER" id="PTHR13363:SF5">
    <property type="entry name" value="E3 UBIQUITIN-PROTEIN LIGASE RNF123"/>
    <property type="match status" value="1"/>
</dbReference>
<dbReference type="PANTHER" id="PTHR13363">
    <property type="entry name" value="RING FINGER AND SRY DOMAIN-CONTAINING"/>
    <property type="match status" value="1"/>
</dbReference>
<dbReference type="Pfam" id="PF00622">
    <property type="entry name" value="SPRY"/>
    <property type="match status" value="1"/>
</dbReference>
<dbReference type="Pfam" id="PF13920">
    <property type="entry name" value="zf-C3HC4_3"/>
    <property type="match status" value="1"/>
</dbReference>
<dbReference type="SMART" id="SM00184">
    <property type="entry name" value="RING"/>
    <property type="match status" value="1"/>
</dbReference>
<dbReference type="SMART" id="SM00449">
    <property type="entry name" value="SPRY"/>
    <property type="match status" value="1"/>
</dbReference>
<dbReference type="SUPFAM" id="SSF49899">
    <property type="entry name" value="Concanavalin A-like lectins/glucanases"/>
    <property type="match status" value="1"/>
</dbReference>
<dbReference type="SUPFAM" id="SSF57850">
    <property type="entry name" value="RING/U-box"/>
    <property type="match status" value="1"/>
</dbReference>
<dbReference type="PROSITE" id="PS50188">
    <property type="entry name" value="B302_SPRY"/>
    <property type="match status" value="1"/>
</dbReference>
<dbReference type="PROSITE" id="PS50089">
    <property type="entry name" value="ZF_RING_2"/>
    <property type="match status" value="1"/>
</dbReference>
<comment type="function">
    <text evidence="3 7">Catalytic subunit of the KPC complex that acts as E3 ubiquitin-protein ligase (By similarity). Promotes the ubiquitination and proteasome-mediated degradation of CDKN1B which is the cyclin-dependent kinase inhibitor at the G0-G1 transition of the cell cycle (By similarity). Also acts as a key regulator of the NF-kappa-B signaling by promoting maturation of the NFKB1 component of NF-kappa-B (PubMed:25860612). Acts by catalyzing ubiquitination of the NFKB1 p105 precursor, leading to limited proteasomal degradation of NFKB1 p105 and generation of the active NFKB1 p50 subunit (By similarity). Functions also as an inhibitor of innate antiviral signaling mediated by RIGI and IFIH1 independently of its E3 ligase activity (By similarity). Interacts with the N-terminal CARD domains of RIGI and IFIH1 and competes with the downstream adapter MAVS (By similarity).</text>
</comment>
<comment type="catalytic activity">
    <reaction evidence="3">
        <text>S-ubiquitinyl-[E2 ubiquitin-conjugating enzyme]-L-cysteine + [acceptor protein]-L-lysine = [E2 ubiquitin-conjugating enzyme]-L-cysteine + N(6)-ubiquitinyl-[acceptor protein]-L-lysine.</text>
        <dbReference type="EC" id="2.3.2.27"/>
    </reaction>
</comment>
<comment type="pathway">
    <text evidence="3">Protein modification; protein ubiquitination.</text>
</comment>
<comment type="subunit">
    <text evidence="3 7">Component of the KPC complex composed of RNF123/KPC1 and UBAC1/KPC2 (PubMed:25860612). Interacts with UBAC1 and CDKN1B via its N-terminal domain (By similarity). Interacts with RIGI (via N-terminus) and IFIH1 (via N-terminus) (By similarity).</text>
</comment>
<comment type="subcellular location">
    <subcellularLocation>
        <location evidence="3">Cytoplasm</location>
    </subcellularLocation>
</comment>
<comment type="PTM">
    <text evidence="1">Ubiquitinated, leading to its degradation. Deubiquitinated by USP19, thereby stimulating CDKN1B ubiquitin-dependent degradation.</text>
</comment>
<reference key="1">
    <citation type="journal article" date="2011" name="Nature">
        <title>A high-resolution map of human evolutionary constraint using 29 mammals.</title>
        <authorList>
            <person name="Lindblad-Toh K."/>
            <person name="Garber M."/>
            <person name="Zuk O."/>
            <person name="Lin M.F."/>
            <person name="Parker B.J."/>
            <person name="Washietl S."/>
            <person name="Kheradpour P."/>
            <person name="Ernst J."/>
            <person name="Jordan G."/>
            <person name="Mauceli E."/>
            <person name="Ward L.D."/>
            <person name="Lowe C.B."/>
            <person name="Holloway A.K."/>
            <person name="Clamp M."/>
            <person name="Gnerre S."/>
            <person name="Alfoldi J."/>
            <person name="Beal K."/>
            <person name="Chang J."/>
            <person name="Clawson H."/>
            <person name="Cuff J."/>
            <person name="Di Palma F."/>
            <person name="Fitzgerald S."/>
            <person name="Flicek P."/>
            <person name="Guttman M."/>
            <person name="Hubisz M.J."/>
            <person name="Jaffe D.B."/>
            <person name="Jungreis I."/>
            <person name="Kent W.J."/>
            <person name="Kostka D."/>
            <person name="Lara M."/>
            <person name="Martins A.L."/>
            <person name="Massingham T."/>
            <person name="Moltke I."/>
            <person name="Raney B.J."/>
            <person name="Rasmussen M.D."/>
            <person name="Robinson J."/>
            <person name="Stark A."/>
            <person name="Vilella A.J."/>
            <person name="Wen J."/>
            <person name="Xie X."/>
            <person name="Zody M.C."/>
            <person name="Baldwin J."/>
            <person name="Bloom T."/>
            <person name="Chin C.W."/>
            <person name="Heiman D."/>
            <person name="Nicol R."/>
            <person name="Nusbaum C."/>
            <person name="Young S."/>
            <person name="Wilkinson J."/>
            <person name="Worley K.C."/>
            <person name="Kovar C.L."/>
            <person name="Muzny D.M."/>
            <person name="Gibbs R.A."/>
            <person name="Cree A."/>
            <person name="Dihn H.H."/>
            <person name="Fowler G."/>
            <person name="Jhangiani S."/>
            <person name="Joshi V."/>
            <person name="Lee S."/>
            <person name="Lewis L.R."/>
            <person name="Nazareth L.V."/>
            <person name="Okwuonu G."/>
            <person name="Santibanez J."/>
            <person name="Warren W.C."/>
            <person name="Mardis E.R."/>
            <person name="Weinstock G.M."/>
            <person name="Wilson R.K."/>
            <person name="Delehaunty K."/>
            <person name="Dooling D."/>
            <person name="Fronik C."/>
            <person name="Fulton L."/>
            <person name="Fulton B."/>
            <person name="Graves T."/>
            <person name="Minx P."/>
            <person name="Sodergren E."/>
            <person name="Birney E."/>
            <person name="Margulies E.H."/>
            <person name="Herrero J."/>
            <person name="Green E.D."/>
            <person name="Haussler D."/>
            <person name="Siepel A."/>
            <person name="Goldman N."/>
            <person name="Pollard K.S."/>
            <person name="Pedersen J.S."/>
            <person name="Lander E.S."/>
            <person name="Kellis M."/>
        </authorList>
    </citation>
    <scope>NUCLEOTIDE SEQUENCE [LARGE SCALE GENOMIC DNA]</scope>
    <source>
        <strain>Thorbecke</strain>
    </source>
</reference>
<reference key="2">
    <citation type="journal article" date="2015" name="Cell">
        <title>KPC1-mediated ubiquitination and proteasomal processing of NF-kappaB1 p105 to p50 restricts tumor growth.</title>
        <authorList>
            <person name="Kravtsova-Ivantsiv Y."/>
            <person name="Shomer I."/>
            <person name="Cohen-Kaplan V."/>
            <person name="Snijder B."/>
            <person name="Superti-Furga G."/>
            <person name="Gonen H."/>
            <person name="Sommer T."/>
            <person name="Ziv T."/>
            <person name="Admon A."/>
            <person name="Naroditsky I."/>
            <person name="Jbara M."/>
            <person name="Brik A."/>
            <person name="Pikarsky E."/>
            <person name="Kwon Y.T."/>
            <person name="Doweck I."/>
            <person name="Ciechanover A."/>
        </authorList>
    </citation>
    <scope>FUNCTION</scope>
    <scope>SUBUNIT</scope>
    <scope>IDENTIFICATION BY MASS SPECTROMETRY</scope>
</reference>
<proteinExistence type="evidence at protein level"/>